<reference key="1">
    <citation type="journal article" date="2006" name="PLoS Biol.">
        <title>Metabolic complementarity and genomics of the dual bacterial symbiosis of sharpshooters.</title>
        <authorList>
            <person name="Wu D."/>
            <person name="Daugherty S.C."/>
            <person name="Van Aken S.E."/>
            <person name="Pai G.H."/>
            <person name="Watkins K.L."/>
            <person name="Khouri H."/>
            <person name="Tallon L.J."/>
            <person name="Zaborsky J.M."/>
            <person name="Dunbar H.E."/>
            <person name="Tran P.L."/>
            <person name="Moran N.A."/>
            <person name="Eisen J.A."/>
        </authorList>
    </citation>
    <scope>NUCLEOTIDE SEQUENCE [LARGE SCALE GENOMIC DNA]</scope>
</reference>
<gene>
    <name evidence="1" type="primary">rpsC</name>
    <name type="ordered locus">BCI_0334</name>
</gene>
<proteinExistence type="inferred from homology"/>
<dbReference type="EMBL" id="CP000238">
    <property type="protein sequence ID" value="ABF13786.1"/>
    <property type="molecule type" value="Genomic_DNA"/>
</dbReference>
<dbReference type="RefSeq" id="WP_011520515.1">
    <property type="nucleotide sequence ID" value="NC_007984.1"/>
</dbReference>
<dbReference type="SMR" id="Q1LTD2"/>
<dbReference type="STRING" id="374463.BCI_0334"/>
<dbReference type="KEGG" id="bci:BCI_0334"/>
<dbReference type="HOGENOM" id="CLU_058591_0_2_6"/>
<dbReference type="OrthoDB" id="9806396at2"/>
<dbReference type="Proteomes" id="UP000002427">
    <property type="component" value="Chromosome"/>
</dbReference>
<dbReference type="GO" id="GO:0022627">
    <property type="term" value="C:cytosolic small ribosomal subunit"/>
    <property type="evidence" value="ECO:0007669"/>
    <property type="project" value="TreeGrafter"/>
</dbReference>
<dbReference type="GO" id="GO:0003729">
    <property type="term" value="F:mRNA binding"/>
    <property type="evidence" value="ECO:0007669"/>
    <property type="project" value="UniProtKB-UniRule"/>
</dbReference>
<dbReference type="GO" id="GO:0019843">
    <property type="term" value="F:rRNA binding"/>
    <property type="evidence" value="ECO:0007669"/>
    <property type="project" value="UniProtKB-UniRule"/>
</dbReference>
<dbReference type="GO" id="GO:0003735">
    <property type="term" value="F:structural constituent of ribosome"/>
    <property type="evidence" value="ECO:0007669"/>
    <property type="project" value="InterPro"/>
</dbReference>
<dbReference type="GO" id="GO:0006412">
    <property type="term" value="P:translation"/>
    <property type="evidence" value="ECO:0007669"/>
    <property type="project" value="UniProtKB-UniRule"/>
</dbReference>
<dbReference type="CDD" id="cd02412">
    <property type="entry name" value="KH-II_30S_S3"/>
    <property type="match status" value="1"/>
</dbReference>
<dbReference type="FunFam" id="3.30.1140.32:FF:000001">
    <property type="entry name" value="30S ribosomal protein S3"/>
    <property type="match status" value="1"/>
</dbReference>
<dbReference type="FunFam" id="3.30.300.20:FF:000001">
    <property type="entry name" value="30S ribosomal protein S3"/>
    <property type="match status" value="1"/>
</dbReference>
<dbReference type="Gene3D" id="3.30.300.20">
    <property type="match status" value="1"/>
</dbReference>
<dbReference type="Gene3D" id="3.30.1140.32">
    <property type="entry name" value="Ribosomal protein S3, C-terminal domain"/>
    <property type="match status" value="1"/>
</dbReference>
<dbReference type="HAMAP" id="MF_01309_B">
    <property type="entry name" value="Ribosomal_uS3_B"/>
    <property type="match status" value="1"/>
</dbReference>
<dbReference type="InterPro" id="IPR004087">
    <property type="entry name" value="KH_dom"/>
</dbReference>
<dbReference type="InterPro" id="IPR015946">
    <property type="entry name" value="KH_dom-like_a/b"/>
</dbReference>
<dbReference type="InterPro" id="IPR004044">
    <property type="entry name" value="KH_dom_type_2"/>
</dbReference>
<dbReference type="InterPro" id="IPR009019">
    <property type="entry name" value="KH_sf_prok-type"/>
</dbReference>
<dbReference type="InterPro" id="IPR036419">
    <property type="entry name" value="Ribosomal_S3_C_sf"/>
</dbReference>
<dbReference type="InterPro" id="IPR005704">
    <property type="entry name" value="Ribosomal_uS3_bac-typ"/>
</dbReference>
<dbReference type="InterPro" id="IPR001351">
    <property type="entry name" value="Ribosomal_uS3_C"/>
</dbReference>
<dbReference type="InterPro" id="IPR018280">
    <property type="entry name" value="Ribosomal_uS3_CS"/>
</dbReference>
<dbReference type="NCBIfam" id="TIGR01009">
    <property type="entry name" value="rpsC_bact"/>
    <property type="match status" value="1"/>
</dbReference>
<dbReference type="PANTHER" id="PTHR11760">
    <property type="entry name" value="30S/40S RIBOSOMAL PROTEIN S3"/>
    <property type="match status" value="1"/>
</dbReference>
<dbReference type="PANTHER" id="PTHR11760:SF19">
    <property type="entry name" value="SMALL RIBOSOMAL SUBUNIT PROTEIN US3C"/>
    <property type="match status" value="1"/>
</dbReference>
<dbReference type="Pfam" id="PF07650">
    <property type="entry name" value="KH_2"/>
    <property type="match status" value="1"/>
</dbReference>
<dbReference type="Pfam" id="PF00189">
    <property type="entry name" value="Ribosomal_S3_C"/>
    <property type="match status" value="1"/>
</dbReference>
<dbReference type="SMART" id="SM00322">
    <property type="entry name" value="KH"/>
    <property type="match status" value="1"/>
</dbReference>
<dbReference type="SUPFAM" id="SSF54814">
    <property type="entry name" value="Prokaryotic type KH domain (KH-domain type II)"/>
    <property type="match status" value="1"/>
</dbReference>
<dbReference type="SUPFAM" id="SSF54821">
    <property type="entry name" value="Ribosomal protein S3 C-terminal domain"/>
    <property type="match status" value="1"/>
</dbReference>
<dbReference type="PROSITE" id="PS50823">
    <property type="entry name" value="KH_TYPE_2"/>
    <property type="match status" value="1"/>
</dbReference>
<dbReference type="PROSITE" id="PS00548">
    <property type="entry name" value="RIBOSOMAL_S3"/>
    <property type="match status" value="1"/>
</dbReference>
<feature type="chain" id="PRO_0000293756" description="Small ribosomal subunit protein uS3">
    <location>
        <begin position="1"/>
        <end position="233"/>
    </location>
</feature>
<feature type="domain" description="KH type-2" evidence="1">
    <location>
        <begin position="39"/>
        <end position="107"/>
    </location>
</feature>
<evidence type="ECO:0000255" key="1">
    <source>
        <dbReference type="HAMAP-Rule" id="MF_01309"/>
    </source>
</evidence>
<evidence type="ECO:0000305" key="2"/>
<protein>
    <recommendedName>
        <fullName evidence="1">Small ribosomal subunit protein uS3</fullName>
    </recommendedName>
    <alternativeName>
        <fullName evidence="2">30S ribosomal protein S3</fullName>
    </alternativeName>
</protein>
<keyword id="KW-1185">Reference proteome</keyword>
<keyword id="KW-0687">Ribonucleoprotein</keyword>
<keyword id="KW-0689">Ribosomal protein</keyword>
<keyword id="KW-0694">RNA-binding</keyword>
<keyword id="KW-0699">rRNA-binding</keyword>
<accession>Q1LTD2</accession>
<name>RS3_BAUCH</name>
<sequence>MGQKVHPNGFRLGIIKYWNSTWYANKKEFAQYLNSDFKVRQFLASELTKASISRVVIERPAKSIRITIHTARPGIIIGKKGEDVEKLRKSISLIAGVPSQINIAEVRKPELNAKLVAESIVSQIERRVIFRRAMKRAVQNTIRLGAKGIKVEVSGRLSGVEIARTEWYREGRVPLHTLRADIDYHVSEAHTTYGVIGVKVWIFKGEILDGMMAVEPTIESITPPKTQQRKGRK</sequence>
<comment type="function">
    <text evidence="1">Binds the lower part of the 30S subunit head. Binds mRNA in the 70S ribosome, positioning it for translation.</text>
</comment>
<comment type="subunit">
    <text evidence="1">Part of the 30S ribosomal subunit. Forms a tight complex with proteins S10 and S14.</text>
</comment>
<comment type="similarity">
    <text evidence="1">Belongs to the universal ribosomal protein uS3 family.</text>
</comment>
<organism>
    <name type="scientific">Baumannia cicadellinicola subsp. Homalodisca coagulata</name>
    <dbReference type="NCBI Taxonomy" id="374463"/>
    <lineage>
        <taxon>Bacteria</taxon>
        <taxon>Pseudomonadati</taxon>
        <taxon>Pseudomonadota</taxon>
        <taxon>Gammaproteobacteria</taxon>
        <taxon>Candidatus Palibaumannia</taxon>
    </lineage>
</organism>